<keyword id="KW-0066">ATP synthesis</keyword>
<keyword id="KW-1003">Cell membrane</keyword>
<keyword id="KW-0139">CF(1)</keyword>
<keyword id="KW-0375">Hydrogen ion transport</keyword>
<keyword id="KW-0406">Ion transport</keyword>
<keyword id="KW-0472">Membrane</keyword>
<keyword id="KW-1185">Reference proteome</keyword>
<keyword id="KW-0813">Transport</keyword>
<dbReference type="EMBL" id="AB048368">
    <property type="protein sequence ID" value="BAB13361.1"/>
    <property type="molecule type" value="Genomic_DNA"/>
</dbReference>
<dbReference type="EMBL" id="AB046112">
    <property type="protein sequence ID" value="BAB08158.1"/>
    <property type="molecule type" value="Genomic_DNA"/>
</dbReference>
<dbReference type="EMBL" id="BA000036">
    <property type="protein sequence ID" value="BAB98606.1"/>
    <property type="molecule type" value="Genomic_DNA"/>
</dbReference>
<dbReference type="EMBL" id="BX927151">
    <property type="protein sequence ID" value="CAF19917.1"/>
    <property type="molecule type" value="Genomic_DNA"/>
</dbReference>
<dbReference type="RefSeq" id="NP_600438.1">
    <property type="nucleotide sequence ID" value="NC_003450.3"/>
</dbReference>
<dbReference type="RefSeq" id="WP_003861337.1">
    <property type="nucleotide sequence ID" value="NC_006958.1"/>
</dbReference>
<dbReference type="SMR" id="Q9ETA7"/>
<dbReference type="STRING" id="196627.cg1369"/>
<dbReference type="KEGG" id="cgb:cg1369"/>
<dbReference type="KEGG" id="cgl:Cgl1213"/>
<dbReference type="PATRIC" id="fig|196627.13.peg.1192"/>
<dbReference type="eggNOG" id="COG0355">
    <property type="taxonomic scope" value="Bacteria"/>
</dbReference>
<dbReference type="HOGENOM" id="CLU_084338_4_0_11"/>
<dbReference type="OrthoDB" id="9791445at2"/>
<dbReference type="BioCyc" id="CORYNE:G18NG-10786-MONOMER"/>
<dbReference type="Proteomes" id="UP000000582">
    <property type="component" value="Chromosome"/>
</dbReference>
<dbReference type="Proteomes" id="UP000001009">
    <property type="component" value="Chromosome"/>
</dbReference>
<dbReference type="GO" id="GO:0005886">
    <property type="term" value="C:plasma membrane"/>
    <property type="evidence" value="ECO:0007669"/>
    <property type="project" value="UniProtKB-SubCell"/>
</dbReference>
<dbReference type="GO" id="GO:0045259">
    <property type="term" value="C:proton-transporting ATP synthase complex"/>
    <property type="evidence" value="ECO:0007669"/>
    <property type="project" value="UniProtKB-KW"/>
</dbReference>
<dbReference type="GO" id="GO:0005524">
    <property type="term" value="F:ATP binding"/>
    <property type="evidence" value="ECO:0007669"/>
    <property type="project" value="UniProtKB-UniRule"/>
</dbReference>
<dbReference type="GO" id="GO:0046933">
    <property type="term" value="F:proton-transporting ATP synthase activity, rotational mechanism"/>
    <property type="evidence" value="ECO:0007669"/>
    <property type="project" value="UniProtKB-UniRule"/>
</dbReference>
<dbReference type="CDD" id="cd12152">
    <property type="entry name" value="F1-ATPase_delta"/>
    <property type="match status" value="1"/>
</dbReference>
<dbReference type="Gene3D" id="2.60.15.10">
    <property type="entry name" value="F0F1 ATP synthase delta/epsilon subunit, N-terminal"/>
    <property type="match status" value="1"/>
</dbReference>
<dbReference type="HAMAP" id="MF_00530">
    <property type="entry name" value="ATP_synth_epsil_bac"/>
    <property type="match status" value="1"/>
</dbReference>
<dbReference type="InterPro" id="IPR001469">
    <property type="entry name" value="ATP_synth_F1_dsu/esu"/>
</dbReference>
<dbReference type="InterPro" id="IPR020546">
    <property type="entry name" value="ATP_synth_F1_dsu/esu_N"/>
</dbReference>
<dbReference type="InterPro" id="IPR036771">
    <property type="entry name" value="ATPsynth_dsu/esu_N"/>
</dbReference>
<dbReference type="NCBIfam" id="TIGR01216">
    <property type="entry name" value="ATP_synt_epsi"/>
    <property type="match status" value="1"/>
</dbReference>
<dbReference type="NCBIfam" id="NF001852">
    <property type="entry name" value="PRK00571.2-5"/>
    <property type="match status" value="1"/>
</dbReference>
<dbReference type="NCBIfam" id="NF009977">
    <property type="entry name" value="PRK13442.1"/>
    <property type="match status" value="1"/>
</dbReference>
<dbReference type="PANTHER" id="PTHR13822">
    <property type="entry name" value="ATP SYNTHASE DELTA/EPSILON CHAIN"/>
    <property type="match status" value="1"/>
</dbReference>
<dbReference type="PANTHER" id="PTHR13822:SF10">
    <property type="entry name" value="ATP SYNTHASE EPSILON CHAIN, CHLOROPLASTIC"/>
    <property type="match status" value="1"/>
</dbReference>
<dbReference type="Pfam" id="PF02823">
    <property type="entry name" value="ATP-synt_DE_N"/>
    <property type="match status" value="1"/>
</dbReference>
<dbReference type="SUPFAM" id="SSF51344">
    <property type="entry name" value="Epsilon subunit of F1F0-ATP synthase N-terminal domain"/>
    <property type="match status" value="1"/>
</dbReference>
<accession>Q9ETA7</accession>
<evidence type="ECO:0000255" key="1">
    <source>
        <dbReference type="HAMAP-Rule" id="MF_00530"/>
    </source>
</evidence>
<proteinExistence type="inferred from homology"/>
<sequence>MAEITVELVSVERMLWAGQASIVTAQTTEGEIGVLPDHEPLLGQLVENGVVTIQPIDGEKLIAGVSDGFLSVSKEKVTILADFAVWANEVDTASAEADLNSDDELAKAHAEAGLRAVRRSSEGL</sequence>
<gene>
    <name evidence="1" type="primary">atpC</name>
    <name type="ordered locus">Cgl1213</name>
    <name type="ordered locus">cg1369</name>
</gene>
<name>ATPE_CORGL</name>
<reference key="1">
    <citation type="submission" date="2000-09" db="EMBL/GenBank/DDBJ databases">
        <title>Nucleotide sequence of atp operon of Brevibacterium flavum.</title>
        <authorList>
            <person name="Sekine H."/>
            <person name="Tomita F."/>
            <person name="Yokota A."/>
        </authorList>
    </citation>
    <scope>NUCLEOTIDE SEQUENCE [GENOMIC DNA]</scope>
    <source>
        <strain>ATCC 14067 / DSM 20411 / NCIB 9565 / 2247</strain>
    </source>
</reference>
<reference key="2">
    <citation type="submission" date="2000-07" db="EMBL/GenBank/DDBJ databases">
        <title>Nucleotide sequence of atp operon of Corynebacterium glutamicum.</title>
        <authorList>
            <person name="Sekine H."/>
            <person name="Yokota A."/>
            <person name="Tomita F."/>
        </authorList>
    </citation>
    <scope>NUCLEOTIDE SEQUENCE [GENOMIC DNA]</scope>
    <source>
        <strain>ATCC 13060 / LMG 3653 / NCIB 10333 / 614</strain>
    </source>
</reference>
<reference key="3">
    <citation type="journal article" date="2003" name="Appl. Microbiol. Biotechnol.">
        <title>The Corynebacterium glutamicum genome: features and impacts on biotechnological processes.</title>
        <authorList>
            <person name="Ikeda M."/>
            <person name="Nakagawa S."/>
        </authorList>
    </citation>
    <scope>NUCLEOTIDE SEQUENCE [LARGE SCALE GENOMIC DNA]</scope>
    <source>
        <strain>ATCC 13032 / DSM 20300 / JCM 1318 / BCRC 11384 / CCUG 27702 / LMG 3730 / NBRC 12168 / NCIMB 10025 / NRRL B-2784 / 534</strain>
    </source>
</reference>
<reference key="4">
    <citation type="journal article" date="2003" name="J. Biotechnol.">
        <title>The complete Corynebacterium glutamicum ATCC 13032 genome sequence and its impact on the production of L-aspartate-derived amino acids and vitamins.</title>
        <authorList>
            <person name="Kalinowski J."/>
            <person name="Bathe B."/>
            <person name="Bartels D."/>
            <person name="Bischoff N."/>
            <person name="Bott M."/>
            <person name="Burkovski A."/>
            <person name="Dusch N."/>
            <person name="Eggeling L."/>
            <person name="Eikmanns B.J."/>
            <person name="Gaigalat L."/>
            <person name="Goesmann A."/>
            <person name="Hartmann M."/>
            <person name="Huthmacher K."/>
            <person name="Kraemer R."/>
            <person name="Linke B."/>
            <person name="McHardy A.C."/>
            <person name="Meyer F."/>
            <person name="Moeckel B."/>
            <person name="Pfefferle W."/>
            <person name="Puehler A."/>
            <person name="Rey D.A."/>
            <person name="Rueckert C."/>
            <person name="Rupp O."/>
            <person name="Sahm H."/>
            <person name="Wendisch V.F."/>
            <person name="Wiegraebe I."/>
            <person name="Tauch A."/>
        </authorList>
    </citation>
    <scope>NUCLEOTIDE SEQUENCE [LARGE SCALE GENOMIC DNA]</scope>
    <source>
        <strain>ATCC 13032 / DSM 20300 / JCM 1318 / BCRC 11384 / CCUG 27702 / LMG 3730 / NBRC 12168 / NCIMB 10025 / NRRL B-2784 / 534</strain>
    </source>
</reference>
<protein>
    <recommendedName>
        <fullName evidence="1">ATP synthase epsilon chain</fullName>
    </recommendedName>
    <alternativeName>
        <fullName evidence="1">ATP synthase F1 sector epsilon subunit</fullName>
    </alternativeName>
    <alternativeName>
        <fullName evidence="1">F-ATPase epsilon subunit</fullName>
    </alternativeName>
</protein>
<organism>
    <name type="scientific">Corynebacterium glutamicum (strain ATCC 13032 / DSM 20300 / JCM 1318 / BCRC 11384 / CCUG 27702 / LMG 3730 / NBRC 12168 / NCIMB 10025 / NRRL B-2784 / 534)</name>
    <dbReference type="NCBI Taxonomy" id="196627"/>
    <lineage>
        <taxon>Bacteria</taxon>
        <taxon>Bacillati</taxon>
        <taxon>Actinomycetota</taxon>
        <taxon>Actinomycetes</taxon>
        <taxon>Mycobacteriales</taxon>
        <taxon>Corynebacteriaceae</taxon>
        <taxon>Corynebacterium</taxon>
    </lineage>
</organism>
<comment type="function">
    <text evidence="1">Produces ATP from ADP in the presence of a proton gradient across the membrane.</text>
</comment>
<comment type="subunit">
    <text>F-type ATPases have 2 components, CF(1) - the catalytic core - and CF(0) - the membrane proton channel. CF(1) has five subunits: alpha(3), beta(3), gamma(1), delta(1), epsilon(1). CF(0) has three main subunits: a, b and c.</text>
</comment>
<comment type="subcellular location">
    <subcellularLocation>
        <location evidence="1">Cell membrane</location>
        <topology evidence="1">Peripheral membrane protein</topology>
    </subcellularLocation>
</comment>
<comment type="similarity">
    <text evidence="1">Belongs to the ATPase epsilon chain family.</text>
</comment>
<feature type="chain" id="PRO_0000188127" description="ATP synthase epsilon chain">
    <location>
        <begin position="1"/>
        <end position="124"/>
    </location>
</feature>